<comment type="function">
    <text evidence="1 2">Component of the nexin-dynein regulatory complex (N-DRC) a key regulator of ciliary/flagellar motility which maintains the alignment and integrity of the distal axoneme and regulates microtubule sliding in motile axonemes. Plays a critical role in the assembly of N-DRC and also stabilizes the assembly of multiple inner dynein arms and radial spokes. Coassembles with CCDC65/DRC2 to form a central scaffold needed for assembly of the N-DRC and its attachment to the outer doublet microtubules.</text>
</comment>
<comment type="subunit">
    <text evidence="1">Component of the nexin-dynein regulatory complex (N-DRC).</text>
</comment>
<comment type="subcellular location">
    <subcellularLocation>
        <location evidence="1">Cytoplasm</location>
        <location evidence="1">Cytoskeleton</location>
        <location evidence="1">Cilium axoneme</location>
    </subcellularLocation>
    <subcellularLocation>
        <location evidence="1">Cytoplasm</location>
        <location evidence="1">Cytoskeleton</location>
        <location evidence="1">Flagellum axoneme</location>
    </subcellularLocation>
</comment>
<comment type="similarity">
    <text evidence="5">Belongs to the DRC1 family.</text>
</comment>
<comment type="sequence caution" evidence="5">
    <conflict type="erroneous gene model prediction">
        <sequence resource="EMBL-CDS" id="CAI21200"/>
    </conflict>
</comment>
<sequence length="670" mass="78176">MHQTEAFAAGEEAEELRPSVESDKKEERILARRLRLAARKEAQTKQRLGEDDLGKEDVKEETRKSQKEVEHRERRMAKLKSDGLELVTNIQVAADARESDRRTELEEGHRLRREKLENEAKSSQEKFEEINRKWTDAKMKQTPLDLRDALSSQQQLCEQIIADKNKLISELQQELKASDDRYVKDLKRQAKDIDLLVERMEEQISTLKKSYREDLHQIENSLDEERRTLLTKHKKKWEHERKDRNEKELKNMMQSLSVMEEYADLLQKLRVQTAEEYNIDKIRMDTEVQKLRMKVQQTKFNCHMNEEKLDYKYEVLKKKEEENAIIKSQLKRKIIRMQDVLNNLKSKLTKQEKQSKAGNQSLSNDYTRISQQYKDMQKKARHFAALDAERLEKLWLMCEDEAKALTHRALETDRVIHEQQLGLEWASPPLPFMERSGAVQQKTFRTATQAAADTLKGEPEGGLDEDTAAGLNKRTVKSILELLCDEMGFLVESKLLMLLSPLEKNEQSLIKLDAIFSAIGIESEKDVYKMAEFFMNYRQHESKYTKDETANGQGESAEELSNLIHTEDLLAALKDFTAQFCRQDVHASHKSSILGLDMRDDSEDAAYWESIANVMPESKLKLWDALDTALNKYHAVLTERTELLMETQNIQQQNSELRQLLHLYTTSKAQ</sequence>
<keyword id="KW-0966">Cell projection</keyword>
<keyword id="KW-0969">Cilium</keyword>
<keyword id="KW-0175">Coiled coil</keyword>
<keyword id="KW-0963">Cytoplasm</keyword>
<keyword id="KW-0206">Cytoskeleton</keyword>
<keyword id="KW-0282">Flagellum</keyword>
<keyword id="KW-1185">Reference proteome</keyword>
<proteinExistence type="evidence at transcript level"/>
<gene>
    <name type="primary">drc1</name>
    <name type="synonym">ccdc164</name>
    <name type="ORF">si:dkey-65b13.6</name>
</gene>
<dbReference type="EMBL" id="AL929220">
    <property type="protein sequence ID" value="CAI21200.1"/>
    <property type="status" value="ALT_SEQ"/>
    <property type="molecule type" value="Genomic_DNA"/>
</dbReference>
<dbReference type="EMBL" id="BC161624">
    <property type="protein sequence ID" value="AAI61624.1"/>
    <property type="molecule type" value="mRNA"/>
</dbReference>
<dbReference type="RefSeq" id="NP_001120940.1">
    <property type="nucleotide sequence ID" value="NM_001127468.1"/>
</dbReference>
<dbReference type="SMR" id="F1QRC1"/>
<dbReference type="FunCoup" id="F1QRC1">
    <property type="interactions" value="250"/>
</dbReference>
<dbReference type="STRING" id="7955.ENSDARP00000061828"/>
<dbReference type="PaxDb" id="7955-ENSDARP00000061828"/>
<dbReference type="Ensembl" id="ENSDART00000061829">
    <property type="protein sequence ID" value="ENSDARP00000061828"/>
    <property type="gene ID" value="ENSDARG00000042182"/>
</dbReference>
<dbReference type="GeneID" id="100034551"/>
<dbReference type="KEGG" id="dre:100034551"/>
<dbReference type="AGR" id="ZFIN:ZDB-GENE-041001-218"/>
<dbReference type="CTD" id="92749"/>
<dbReference type="ZFIN" id="ZDB-GENE-041001-218">
    <property type="gene designation" value="drc1"/>
</dbReference>
<dbReference type="eggNOG" id="ENOG502QQ2B">
    <property type="taxonomic scope" value="Eukaryota"/>
</dbReference>
<dbReference type="HOGENOM" id="CLU_012489_0_0_1"/>
<dbReference type="InParanoid" id="F1QRC1"/>
<dbReference type="OMA" id="LDFMMAR"/>
<dbReference type="OrthoDB" id="10260459at2759"/>
<dbReference type="PhylomeDB" id="F1QRC1"/>
<dbReference type="TreeFam" id="TF324985"/>
<dbReference type="PRO" id="PR:F1QRC1"/>
<dbReference type="Proteomes" id="UP000000437">
    <property type="component" value="Chromosome 20"/>
</dbReference>
<dbReference type="Bgee" id="ENSDARG00000042182">
    <property type="expression patterns" value="Expressed in testis and 27 other cell types or tissues"/>
</dbReference>
<dbReference type="GO" id="GO:0005858">
    <property type="term" value="C:axonemal dynein complex"/>
    <property type="evidence" value="ECO:0007669"/>
    <property type="project" value="InterPro"/>
</dbReference>
<dbReference type="GO" id="GO:0005930">
    <property type="term" value="C:axoneme"/>
    <property type="evidence" value="ECO:0000250"/>
    <property type="project" value="UniProtKB"/>
</dbReference>
<dbReference type="GO" id="GO:0031514">
    <property type="term" value="C:motile cilium"/>
    <property type="evidence" value="ECO:0007669"/>
    <property type="project" value="UniProtKB-KW"/>
</dbReference>
<dbReference type="GO" id="GO:0070286">
    <property type="term" value="P:axonemal dynein complex assembly"/>
    <property type="evidence" value="ECO:0000250"/>
    <property type="project" value="UniProtKB"/>
</dbReference>
<dbReference type="GO" id="GO:0060285">
    <property type="term" value="P:cilium-dependent cell motility"/>
    <property type="evidence" value="ECO:0000250"/>
    <property type="project" value="UniProtKB"/>
</dbReference>
<dbReference type="GO" id="GO:0003352">
    <property type="term" value="P:regulation of cilium movement"/>
    <property type="evidence" value="ECO:0000318"/>
    <property type="project" value="GO_Central"/>
</dbReference>
<dbReference type="InterPro" id="IPR039505">
    <property type="entry name" value="DRC1/2_N"/>
</dbReference>
<dbReference type="InterPro" id="IPR039750">
    <property type="entry name" value="DRC1/DRC2"/>
</dbReference>
<dbReference type="InterPro" id="IPR029440">
    <property type="entry name" value="DRC1_C"/>
</dbReference>
<dbReference type="PANTHER" id="PTHR21625:SF1">
    <property type="entry name" value="DYNEIN REGULATORY COMPLEX PROTEIN 1"/>
    <property type="match status" value="1"/>
</dbReference>
<dbReference type="PANTHER" id="PTHR21625">
    <property type="entry name" value="NYD-SP28 PROTEIN"/>
    <property type="match status" value="1"/>
</dbReference>
<dbReference type="Pfam" id="PF14772">
    <property type="entry name" value="NYD-SP28"/>
    <property type="match status" value="1"/>
</dbReference>
<dbReference type="Pfam" id="PF14775">
    <property type="entry name" value="NYD-SP28_assoc"/>
    <property type="match status" value="1"/>
</dbReference>
<reference key="1">
    <citation type="journal article" date="2013" name="Nature">
        <title>The zebrafish reference genome sequence and its relationship to the human genome.</title>
        <authorList>
            <person name="Howe K."/>
            <person name="Clark M.D."/>
            <person name="Torroja C.F."/>
            <person name="Torrance J."/>
            <person name="Berthelot C."/>
            <person name="Muffato M."/>
            <person name="Collins J.E."/>
            <person name="Humphray S."/>
            <person name="McLaren K."/>
            <person name="Matthews L."/>
            <person name="McLaren S."/>
            <person name="Sealy I."/>
            <person name="Caccamo M."/>
            <person name="Churcher C."/>
            <person name="Scott C."/>
            <person name="Barrett J.C."/>
            <person name="Koch R."/>
            <person name="Rauch G.J."/>
            <person name="White S."/>
            <person name="Chow W."/>
            <person name="Kilian B."/>
            <person name="Quintais L.T."/>
            <person name="Guerra-Assuncao J.A."/>
            <person name="Zhou Y."/>
            <person name="Gu Y."/>
            <person name="Yen J."/>
            <person name="Vogel J.H."/>
            <person name="Eyre T."/>
            <person name="Redmond S."/>
            <person name="Banerjee R."/>
            <person name="Chi J."/>
            <person name="Fu B."/>
            <person name="Langley E."/>
            <person name="Maguire S.F."/>
            <person name="Laird G.K."/>
            <person name="Lloyd D."/>
            <person name="Kenyon E."/>
            <person name="Donaldson S."/>
            <person name="Sehra H."/>
            <person name="Almeida-King J."/>
            <person name="Loveland J."/>
            <person name="Trevanion S."/>
            <person name="Jones M."/>
            <person name="Quail M."/>
            <person name="Willey D."/>
            <person name="Hunt A."/>
            <person name="Burton J."/>
            <person name="Sims S."/>
            <person name="McLay K."/>
            <person name="Plumb B."/>
            <person name="Davis J."/>
            <person name="Clee C."/>
            <person name="Oliver K."/>
            <person name="Clark R."/>
            <person name="Riddle C."/>
            <person name="Elliot D."/>
            <person name="Threadgold G."/>
            <person name="Harden G."/>
            <person name="Ware D."/>
            <person name="Begum S."/>
            <person name="Mortimore B."/>
            <person name="Kerry G."/>
            <person name="Heath P."/>
            <person name="Phillimore B."/>
            <person name="Tracey A."/>
            <person name="Corby N."/>
            <person name="Dunn M."/>
            <person name="Johnson C."/>
            <person name="Wood J."/>
            <person name="Clark S."/>
            <person name="Pelan S."/>
            <person name="Griffiths G."/>
            <person name="Smith M."/>
            <person name="Glithero R."/>
            <person name="Howden P."/>
            <person name="Barker N."/>
            <person name="Lloyd C."/>
            <person name="Stevens C."/>
            <person name="Harley J."/>
            <person name="Holt K."/>
            <person name="Panagiotidis G."/>
            <person name="Lovell J."/>
            <person name="Beasley H."/>
            <person name="Henderson C."/>
            <person name="Gordon D."/>
            <person name="Auger K."/>
            <person name="Wright D."/>
            <person name="Collins J."/>
            <person name="Raisen C."/>
            <person name="Dyer L."/>
            <person name="Leung K."/>
            <person name="Robertson L."/>
            <person name="Ambridge K."/>
            <person name="Leongamornlert D."/>
            <person name="McGuire S."/>
            <person name="Gilderthorp R."/>
            <person name="Griffiths C."/>
            <person name="Manthravadi D."/>
            <person name="Nichol S."/>
            <person name="Barker G."/>
            <person name="Whitehead S."/>
            <person name="Kay M."/>
            <person name="Brown J."/>
            <person name="Murnane C."/>
            <person name="Gray E."/>
            <person name="Humphries M."/>
            <person name="Sycamore N."/>
            <person name="Barker D."/>
            <person name="Saunders D."/>
            <person name="Wallis J."/>
            <person name="Babbage A."/>
            <person name="Hammond S."/>
            <person name="Mashreghi-Mohammadi M."/>
            <person name="Barr L."/>
            <person name="Martin S."/>
            <person name="Wray P."/>
            <person name="Ellington A."/>
            <person name="Matthews N."/>
            <person name="Ellwood M."/>
            <person name="Woodmansey R."/>
            <person name="Clark G."/>
            <person name="Cooper J."/>
            <person name="Tromans A."/>
            <person name="Grafham D."/>
            <person name="Skuce C."/>
            <person name="Pandian R."/>
            <person name="Andrews R."/>
            <person name="Harrison E."/>
            <person name="Kimberley A."/>
            <person name="Garnett J."/>
            <person name="Fosker N."/>
            <person name="Hall R."/>
            <person name="Garner P."/>
            <person name="Kelly D."/>
            <person name="Bird C."/>
            <person name="Palmer S."/>
            <person name="Gehring I."/>
            <person name="Berger A."/>
            <person name="Dooley C.M."/>
            <person name="Ersan-Urun Z."/>
            <person name="Eser C."/>
            <person name="Geiger H."/>
            <person name="Geisler M."/>
            <person name="Karotki L."/>
            <person name="Kirn A."/>
            <person name="Konantz J."/>
            <person name="Konantz M."/>
            <person name="Oberlander M."/>
            <person name="Rudolph-Geiger S."/>
            <person name="Teucke M."/>
            <person name="Lanz C."/>
            <person name="Raddatz G."/>
            <person name="Osoegawa K."/>
            <person name="Zhu B."/>
            <person name="Rapp A."/>
            <person name="Widaa S."/>
            <person name="Langford C."/>
            <person name="Yang F."/>
            <person name="Schuster S.C."/>
            <person name="Carter N.P."/>
            <person name="Harrow J."/>
            <person name="Ning Z."/>
            <person name="Herrero J."/>
            <person name="Searle S.M."/>
            <person name="Enright A."/>
            <person name="Geisler R."/>
            <person name="Plasterk R.H."/>
            <person name="Lee C."/>
            <person name="Westerfield M."/>
            <person name="de Jong P.J."/>
            <person name="Zon L.I."/>
            <person name="Postlethwait J.H."/>
            <person name="Nusslein-Volhard C."/>
            <person name="Hubbard T.J."/>
            <person name="Roest Crollius H."/>
            <person name="Rogers J."/>
            <person name="Stemple D.L."/>
        </authorList>
    </citation>
    <scope>NUCLEOTIDE SEQUENCE [LARGE SCALE GENOMIC DNA]</scope>
    <source>
        <strain>Tuebingen</strain>
    </source>
</reference>
<reference key="2">
    <citation type="submission" date="2008-04" db="EMBL/GenBank/DDBJ databases">
        <authorList>
            <consortium name="NIH - Zebrafish Gene Collection (ZGC) project"/>
        </authorList>
    </citation>
    <scope>NUCLEOTIDE SEQUENCE [LARGE SCALE MRNA]</scope>
    <source>
        <tissue>Testis</tissue>
    </source>
</reference>
<feature type="chain" id="PRO_0000421991" description="Dynein regulatory complex protein 1">
    <location>
        <begin position="1"/>
        <end position="670"/>
    </location>
</feature>
<feature type="region of interest" description="Disordered" evidence="4">
    <location>
        <begin position="1"/>
        <end position="26"/>
    </location>
</feature>
<feature type="region of interest" description="Disordered" evidence="4">
    <location>
        <begin position="39"/>
        <end position="72"/>
    </location>
</feature>
<feature type="coiled-coil region" evidence="3">
    <location>
        <begin position="55"/>
        <end position="261"/>
    </location>
</feature>
<feature type="coiled-coil region" evidence="3">
    <location>
        <begin position="326"/>
        <end position="382"/>
    </location>
</feature>
<feature type="compositionally biased region" description="Low complexity" evidence="4">
    <location>
        <begin position="1"/>
        <end position="10"/>
    </location>
</feature>
<feature type="compositionally biased region" description="Basic and acidic residues" evidence="4">
    <location>
        <begin position="15"/>
        <end position="26"/>
    </location>
</feature>
<feature type="sequence conflict" description="In Ref. 2; AAI61624." evidence="5" ref="2">
    <original>K</original>
    <variation>R</variation>
    <location>
        <position position="45"/>
    </location>
</feature>
<feature type="sequence conflict" description="In Ref. 2; AAI61624." evidence="5" ref="2">
    <original>M</original>
    <variation>I</variation>
    <location>
        <position position="376"/>
    </location>
</feature>
<feature type="sequence conflict" description="In Ref. 2; AAI61624." evidence="5" ref="2">
    <original>E</original>
    <variation>G</variation>
    <location>
        <position position="460"/>
    </location>
</feature>
<feature type="sequence conflict" description="In Ref. 2; AAI61624." evidence="5" ref="2">
    <original>H</original>
    <variation>Q</variation>
    <location>
        <position position="586"/>
    </location>
</feature>
<feature type="sequence conflict" description="In Ref. 2; AAI61624." evidence="5" ref="2">
    <original>A</original>
    <variation>V</variation>
    <location>
        <position position="606"/>
    </location>
</feature>
<evidence type="ECO:0000250" key="1">
    <source>
        <dbReference type="UniProtKB" id="P0DL09"/>
    </source>
</evidence>
<evidence type="ECO:0000250" key="2">
    <source>
        <dbReference type="UniProtKB" id="Q96MC2"/>
    </source>
</evidence>
<evidence type="ECO:0000255" key="3"/>
<evidence type="ECO:0000256" key="4">
    <source>
        <dbReference type="SAM" id="MobiDB-lite"/>
    </source>
</evidence>
<evidence type="ECO:0000305" key="5"/>
<protein>
    <recommendedName>
        <fullName>Dynein regulatory complex protein 1</fullName>
    </recommendedName>
    <alternativeName>
        <fullName>Coiled-coil domain-containing protein 164</fullName>
    </alternativeName>
</protein>
<accession>F1QRC1</accession>
<accession>B1WB57</accession>
<name>DRC1_DANRE</name>
<organism>
    <name type="scientific">Danio rerio</name>
    <name type="common">Zebrafish</name>
    <name type="synonym">Brachydanio rerio</name>
    <dbReference type="NCBI Taxonomy" id="7955"/>
    <lineage>
        <taxon>Eukaryota</taxon>
        <taxon>Metazoa</taxon>
        <taxon>Chordata</taxon>
        <taxon>Craniata</taxon>
        <taxon>Vertebrata</taxon>
        <taxon>Euteleostomi</taxon>
        <taxon>Actinopterygii</taxon>
        <taxon>Neopterygii</taxon>
        <taxon>Teleostei</taxon>
        <taxon>Ostariophysi</taxon>
        <taxon>Cypriniformes</taxon>
        <taxon>Danionidae</taxon>
        <taxon>Danioninae</taxon>
        <taxon>Danio</taxon>
    </lineage>
</organism>